<organism>
    <name type="scientific">Klebsiella pneumoniae (strain 342)</name>
    <dbReference type="NCBI Taxonomy" id="507522"/>
    <lineage>
        <taxon>Bacteria</taxon>
        <taxon>Pseudomonadati</taxon>
        <taxon>Pseudomonadota</taxon>
        <taxon>Gammaproteobacteria</taxon>
        <taxon>Enterobacterales</taxon>
        <taxon>Enterobacteriaceae</taxon>
        <taxon>Klebsiella/Raoultella group</taxon>
        <taxon>Klebsiella</taxon>
        <taxon>Klebsiella pneumoniae complex</taxon>
    </lineage>
</organism>
<reference key="1">
    <citation type="journal article" date="2008" name="PLoS Genet.">
        <title>Complete genome sequence of the N2-fixing broad host range endophyte Klebsiella pneumoniae 342 and virulence predictions verified in mice.</title>
        <authorList>
            <person name="Fouts D.E."/>
            <person name="Tyler H.L."/>
            <person name="DeBoy R.T."/>
            <person name="Daugherty S."/>
            <person name="Ren Q."/>
            <person name="Badger J.H."/>
            <person name="Durkin A.S."/>
            <person name="Huot H."/>
            <person name="Shrivastava S."/>
            <person name="Kothari S."/>
            <person name="Dodson R.J."/>
            <person name="Mohamoud Y."/>
            <person name="Khouri H."/>
            <person name="Roesch L.F.W."/>
            <person name="Krogfelt K.A."/>
            <person name="Struve C."/>
            <person name="Triplett E.W."/>
            <person name="Methe B.A."/>
        </authorList>
    </citation>
    <scope>NUCLEOTIDE SEQUENCE [LARGE SCALE GENOMIC DNA]</scope>
    <source>
        <strain>342</strain>
    </source>
</reference>
<dbReference type="EMBL" id="CP000964">
    <property type="protein sequence ID" value="ACI10230.1"/>
    <property type="molecule type" value="Genomic_DNA"/>
</dbReference>
<dbReference type="KEGG" id="kpe:KPK_0672"/>
<dbReference type="HOGENOM" id="CLU_095624_0_0_6"/>
<dbReference type="BioCyc" id="KPNE507522:GI0B-672-MONOMER"/>
<dbReference type="Proteomes" id="UP000001734">
    <property type="component" value="Chromosome"/>
</dbReference>
<dbReference type="HAMAP" id="MF_01188">
    <property type="entry name" value="UPF0441"/>
    <property type="match status" value="1"/>
</dbReference>
<dbReference type="InterPro" id="IPR009576">
    <property type="entry name" value="Biofilm_formation_YgiB"/>
</dbReference>
<dbReference type="NCBIfam" id="NF008655">
    <property type="entry name" value="PRK11653.1"/>
    <property type="match status" value="1"/>
</dbReference>
<dbReference type="Pfam" id="PF06693">
    <property type="entry name" value="DUF1190"/>
    <property type="match status" value="1"/>
</dbReference>
<accession>B5XU47</accession>
<name>Y672_KLEP3</name>
<comment type="similarity">
    <text evidence="1">Belongs to the UPF0441 family.</text>
</comment>
<sequence>MKRTKKINHSSFRKSWSARHLTPVALAVTAVFMLAGCEKSDETVSLYQNADDCSAANPGKAAECTTAYTNAVKEAERTAPKYATREDCVAEFGEGQCQQTPAQAGVAPENQAQAQSSGSFWMPLMAGYMMGRLMGGGMAQQQPLFSSKNPASPAYGQYTDASGKSYGAAQPGRTMNVPKTAMAPKPATTTTVTRGGFGESVAKQSTMQRSAAGSTSSSRSMGG</sequence>
<protein>
    <recommendedName>
        <fullName evidence="1">UPF0441 protein KPK_0672</fullName>
    </recommendedName>
</protein>
<proteinExistence type="inferred from homology"/>
<gene>
    <name type="ordered locus">KPK_0672</name>
</gene>
<feature type="chain" id="PRO_1000138346" description="UPF0441 protein KPK_0672">
    <location>
        <begin position="1"/>
        <end position="223"/>
    </location>
</feature>
<feature type="region of interest" description="Disordered" evidence="2">
    <location>
        <begin position="165"/>
        <end position="223"/>
    </location>
</feature>
<feature type="compositionally biased region" description="Low complexity" evidence="2">
    <location>
        <begin position="177"/>
        <end position="193"/>
    </location>
</feature>
<feature type="compositionally biased region" description="Low complexity" evidence="2">
    <location>
        <begin position="209"/>
        <end position="223"/>
    </location>
</feature>
<evidence type="ECO:0000255" key="1">
    <source>
        <dbReference type="HAMAP-Rule" id="MF_01188"/>
    </source>
</evidence>
<evidence type="ECO:0000256" key="2">
    <source>
        <dbReference type="SAM" id="MobiDB-lite"/>
    </source>
</evidence>